<keyword id="KW-0093">Biotin biosynthesis</keyword>
<keyword id="KW-0489">Methyltransferase</keyword>
<keyword id="KW-0949">S-adenosyl-L-methionine</keyword>
<keyword id="KW-0808">Transferase</keyword>
<sequence length="250" mass="28417">MPDINNDVVAANFSRASRSYDLVAKIQKECCYKLVAMIRERLPHFMPASVLDIGAGTGYLTKLLLSEFPNACYTMNDISYEMLSRAREMVGESVSTILGDMSKVKFPVSDLIVSSMAIHWSSNPITVLKRVCRLSKVFAFSILVQPSLYEWNRLFHELSLPSPGLHYISSEEVELAMLDTSPTLFTWEVCNFDMRFASPKEFIRYMRQLGSNYSPAGFNAYHVRKVLKHAPGEFFSKYSVMFGVVSRSHF</sequence>
<organism>
    <name type="scientific">Neorickettsia risticii (strain Illinois)</name>
    <dbReference type="NCBI Taxonomy" id="434131"/>
    <lineage>
        <taxon>Bacteria</taxon>
        <taxon>Pseudomonadati</taxon>
        <taxon>Pseudomonadota</taxon>
        <taxon>Alphaproteobacteria</taxon>
        <taxon>Rickettsiales</taxon>
        <taxon>Anaplasmataceae</taxon>
        <taxon>Neorickettsia</taxon>
    </lineage>
</organism>
<protein>
    <recommendedName>
        <fullName evidence="1">Malonyl-[acyl-carrier protein] O-methyltransferase</fullName>
        <shortName evidence="1">Malonyl-ACP O-methyltransferase</shortName>
        <ecNumber evidence="1">2.1.1.197</ecNumber>
    </recommendedName>
    <alternativeName>
        <fullName evidence="1">Biotin synthesis protein BioC</fullName>
    </alternativeName>
</protein>
<reference key="1">
    <citation type="journal article" date="2009" name="Nucleic Acids Res.">
        <title>Analysis of complete genome sequence of Neorickettsia risticii: causative agent of Potomac horse fever.</title>
        <authorList>
            <person name="Lin M."/>
            <person name="Zhang C."/>
            <person name="Gibson K."/>
            <person name="Rikihisa Y."/>
        </authorList>
    </citation>
    <scope>NUCLEOTIDE SEQUENCE [LARGE SCALE GENOMIC DNA]</scope>
    <source>
        <strain>Illinois</strain>
    </source>
</reference>
<accession>C6V598</accession>
<evidence type="ECO:0000255" key="1">
    <source>
        <dbReference type="HAMAP-Rule" id="MF_00835"/>
    </source>
</evidence>
<feature type="chain" id="PRO_0000412513" description="Malonyl-[acyl-carrier protein] O-methyltransferase">
    <location>
        <begin position="1"/>
        <end position="250"/>
    </location>
</feature>
<proteinExistence type="inferred from homology"/>
<gene>
    <name evidence="1" type="primary">bioC</name>
    <name type="ordered locus">NRI_0587</name>
</gene>
<name>BIOC_NEORI</name>
<dbReference type="EC" id="2.1.1.197" evidence="1"/>
<dbReference type="EMBL" id="CP001431">
    <property type="protein sequence ID" value="ACT69573.1"/>
    <property type="molecule type" value="Genomic_DNA"/>
</dbReference>
<dbReference type="RefSeq" id="WP_015816460.1">
    <property type="nucleotide sequence ID" value="NC_013009.1"/>
</dbReference>
<dbReference type="SMR" id="C6V598"/>
<dbReference type="STRING" id="434131.NRI_0587"/>
<dbReference type="KEGG" id="nri:NRI_0587"/>
<dbReference type="eggNOG" id="COG2226">
    <property type="taxonomic scope" value="Bacteria"/>
</dbReference>
<dbReference type="HOGENOM" id="CLU_046586_2_3_5"/>
<dbReference type="OrthoDB" id="9802097at2"/>
<dbReference type="UniPathway" id="UPA00078"/>
<dbReference type="Proteomes" id="UP000001627">
    <property type="component" value="Chromosome"/>
</dbReference>
<dbReference type="GO" id="GO:0010340">
    <property type="term" value="F:carboxyl-O-methyltransferase activity"/>
    <property type="evidence" value="ECO:0007669"/>
    <property type="project" value="UniProtKB-UniRule"/>
</dbReference>
<dbReference type="GO" id="GO:0102130">
    <property type="term" value="F:malonyl-CoA methyltransferase activity"/>
    <property type="evidence" value="ECO:0007669"/>
    <property type="project" value="UniProtKB-EC"/>
</dbReference>
<dbReference type="GO" id="GO:0009102">
    <property type="term" value="P:biotin biosynthetic process"/>
    <property type="evidence" value="ECO:0007669"/>
    <property type="project" value="UniProtKB-UniRule"/>
</dbReference>
<dbReference type="GO" id="GO:0032259">
    <property type="term" value="P:methylation"/>
    <property type="evidence" value="ECO:0007669"/>
    <property type="project" value="UniProtKB-KW"/>
</dbReference>
<dbReference type="CDD" id="cd02440">
    <property type="entry name" value="AdoMet_MTases"/>
    <property type="match status" value="1"/>
</dbReference>
<dbReference type="Gene3D" id="3.40.50.150">
    <property type="entry name" value="Vaccinia Virus protein VP39"/>
    <property type="match status" value="1"/>
</dbReference>
<dbReference type="HAMAP" id="MF_00835">
    <property type="entry name" value="BioC"/>
    <property type="match status" value="1"/>
</dbReference>
<dbReference type="InterPro" id="IPR011814">
    <property type="entry name" value="BioC"/>
</dbReference>
<dbReference type="InterPro" id="IPR041698">
    <property type="entry name" value="Methyltransf_25"/>
</dbReference>
<dbReference type="InterPro" id="IPR029063">
    <property type="entry name" value="SAM-dependent_MTases_sf"/>
</dbReference>
<dbReference type="NCBIfam" id="TIGR02072">
    <property type="entry name" value="BioC"/>
    <property type="match status" value="1"/>
</dbReference>
<dbReference type="PANTHER" id="PTHR43861:SF1">
    <property type="entry name" value="TRANS-ACONITATE 2-METHYLTRANSFERASE"/>
    <property type="match status" value="1"/>
</dbReference>
<dbReference type="PANTHER" id="PTHR43861">
    <property type="entry name" value="TRANS-ACONITATE 2-METHYLTRANSFERASE-RELATED"/>
    <property type="match status" value="1"/>
</dbReference>
<dbReference type="Pfam" id="PF13649">
    <property type="entry name" value="Methyltransf_25"/>
    <property type="match status" value="1"/>
</dbReference>
<dbReference type="SUPFAM" id="SSF53335">
    <property type="entry name" value="S-adenosyl-L-methionine-dependent methyltransferases"/>
    <property type="match status" value="1"/>
</dbReference>
<comment type="function">
    <text evidence="1">Converts the free carboxyl group of a malonyl-thioester to its methyl ester by transfer of a methyl group from S-adenosyl-L-methionine (SAM). It allows to synthesize pimeloyl-ACP via the fatty acid synthetic pathway.</text>
</comment>
<comment type="catalytic activity">
    <reaction evidence="1">
        <text>malonyl-[ACP] + S-adenosyl-L-methionine = malonyl-[ACP] methyl ester + S-adenosyl-L-homocysteine</text>
        <dbReference type="Rhea" id="RHEA:17105"/>
        <dbReference type="Rhea" id="RHEA-COMP:9623"/>
        <dbReference type="Rhea" id="RHEA-COMP:9954"/>
        <dbReference type="ChEBI" id="CHEBI:57856"/>
        <dbReference type="ChEBI" id="CHEBI:59789"/>
        <dbReference type="ChEBI" id="CHEBI:78449"/>
        <dbReference type="ChEBI" id="CHEBI:78845"/>
        <dbReference type="EC" id="2.1.1.197"/>
    </reaction>
</comment>
<comment type="pathway">
    <text evidence="1">Cofactor biosynthesis; biotin biosynthesis.</text>
</comment>
<comment type="similarity">
    <text evidence="1">Belongs to the methyltransferase superfamily.</text>
</comment>